<keyword id="KW-1185">Reference proteome</keyword>
<keyword id="KW-0687">Ribonucleoprotein</keyword>
<keyword id="KW-0689">Ribosomal protein</keyword>
<protein>
    <recommendedName>
        <fullName evidence="1">Large ribosomal subunit protein bL33</fullName>
    </recommendedName>
    <alternativeName>
        <fullName evidence="2">50S ribosomal protein L33</fullName>
    </alternativeName>
</protein>
<reference key="1">
    <citation type="submission" date="2005-08" db="EMBL/GenBank/DDBJ databases">
        <title>Complete sequence of Synechococcus sp. CC9902.</title>
        <authorList>
            <person name="Copeland A."/>
            <person name="Lucas S."/>
            <person name="Lapidus A."/>
            <person name="Barry K."/>
            <person name="Detter J.C."/>
            <person name="Glavina T."/>
            <person name="Hammon N."/>
            <person name="Israni S."/>
            <person name="Pitluck S."/>
            <person name="Martinez M."/>
            <person name="Schmutz J."/>
            <person name="Larimer F."/>
            <person name="Land M."/>
            <person name="Kyrpides N."/>
            <person name="Ivanova N."/>
            <person name="Richardson P."/>
        </authorList>
    </citation>
    <scope>NUCLEOTIDE SEQUENCE [LARGE SCALE GENOMIC DNA]</scope>
    <source>
        <strain>CC9902</strain>
    </source>
</reference>
<name>RL33_SYNS9</name>
<accession>Q3AVJ5</accession>
<feature type="chain" id="PRO_1000004205" description="Large ribosomal subunit protein bL33">
    <location>
        <begin position="1"/>
        <end position="66"/>
    </location>
</feature>
<proteinExistence type="inferred from homology"/>
<dbReference type="EMBL" id="CP000097">
    <property type="protein sequence ID" value="ABB26100.1"/>
    <property type="molecule type" value="Genomic_DNA"/>
</dbReference>
<dbReference type="RefSeq" id="WP_009789789.1">
    <property type="nucleotide sequence ID" value="NC_007513.1"/>
</dbReference>
<dbReference type="SMR" id="Q3AVJ5"/>
<dbReference type="STRING" id="316279.Syncc9902_1136"/>
<dbReference type="KEGG" id="sye:Syncc9902_1136"/>
<dbReference type="eggNOG" id="COG0267">
    <property type="taxonomic scope" value="Bacteria"/>
</dbReference>
<dbReference type="HOGENOM" id="CLU_190949_3_0_3"/>
<dbReference type="OrthoDB" id="9801333at2"/>
<dbReference type="Proteomes" id="UP000002712">
    <property type="component" value="Chromosome"/>
</dbReference>
<dbReference type="GO" id="GO:0005737">
    <property type="term" value="C:cytoplasm"/>
    <property type="evidence" value="ECO:0007669"/>
    <property type="project" value="UniProtKB-ARBA"/>
</dbReference>
<dbReference type="GO" id="GO:1990904">
    <property type="term" value="C:ribonucleoprotein complex"/>
    <property type="evidence" value="ECO:0007669"/>
    <property type="project" value="UniProtKB-KW"/>
</dbReference>
<dbReference type="GO" id="GO:0005840">
    <property type="term" value="C:ribosome"/>
    <property type="evidence" value="ECO:0007669"/>
    <property type="project" value="UniProtKB-KW"/>
</dbReference>
<dbReference type="GO" id="GO:0003735">
    <property type="term" value="F:structural constituent of ribosome"/>
    <property type="evidence" value="ECO:0007669"/>
    <property type="project" value="InterPro"/>
</dbReference>
<dbReference type="GO" id="GO:0006412">
    <property type="term" value="P:translation"/>
    <property type="evidence" value="ECO:0007669"/>
    <property type="project" value="UniProtKB-UniRule"/>
</dbReference>
<dbReference type="Gene3D" id="2.20.28.120">
    <property type="entry name" value="Ribosomal protein L33"/>
    <property type="match status" value="1"/>
</dbReference>
<dbReference type="HAMAP" id="MF_00294">
    <property type="entry name" value="Ribosomal_bL33"/>
    <property type="match status" value="1"/>
</dbReference>
<dbReference type="InterPro" id="IPR001705">
    <property type="entry name" value="Ribosomal_bL33"/>
</dbReference>
<dbReference type="InterPro" id="IPR018264">
    <property type="entry name" value="Ribosomal_bL33_CS"/>
</dbReference>
<dbReference type="InterPro" id="IPR038584">
    <property type="entry name" value="Ribosomal_bL33_sf"/>
</dbReference>
<dbReference type="InterPro" id="IPR011332">
    <property type="entry name" value="Ribosomal_zn-bd"/>
</dbReference>
<dbReference type="NCBIfam" id="NF001764">
    <property type="entry name" value="PRK00504.1"/>
    <property type="match status" value="1"/>
</dbReference>
<dbReference type="NCBIfam" id="NF001860">
    <property type="entry name" value="PRK00595.1"/>
    <property type="match status" value="1"/>
</dbReference>
<dbReference type="NCBIfam" id="TIGR01023">
    <property type="entry name" value="rpmG_bact"/>
    <property type="match status" value="1"/>
</dbReference>
<dbReference type="PANTHER" id="PTHR43168">
    <property type="entry name" value="50S RIBOSOMAL PROTEIN L33, CHLOROPLASTIC"/>
    <property type="match status" value="1"/>
</dbReference>
<dbReference type="PANTHER" id="PTHR43168:SF2">
    <property type="entry name" value="LARGE RIBOSOMAL SUBUNIT PROTEIN BL33C"/>
    <property type="match status" value="1"/>
</dbReference>
<dbReference type="Pfam" id="PF00471">
    <property type="entry name" value="Ribosomal_L33"/>
    <property type="match status" value="1"/>
</dbReference>
<dbReference type="SUPFAM" id="SSF57829">
    <property type="entry name" value="Zn-binding ribosomal proteins"/>
    <property type="match status" value="1"/>
</dbReference>
<dbReference type="PROSITE" id="PS00582">
    <property type="entry name" value="RIBOSOMAL_L33"/>
    <property type="match status" value="1"/>
</dbReference>
<comment type="similarity">
    <text evidence="1">Belongs to the bacterial ribosomal protein bL33 family.</text>
</comment>
<gene>
    <name evidence="1" type="primary">rpmG</name>
    <name evidence="1" type="synonym">rpl33</name>
    <name type="ordered locus">Syncc9902_1136</name>
</gene>
<organism>
    <name type="scientific">Synechococcus sp. (strain CC9902)</name>
    <dbReference type="NCBI Taxonomy" id="316279"/>
    <lineage>
        <taxon>Bacteria</taxon>
        <taxon>Bacillati</taxon>
        <taxon>Cyanobacteriota</taxon>
        <taxon>Cyanophyceae</taxon>
        <taxon>Synechococcales</taxon>
        <taxon>Synechococcaceae</taxon>
        <taxon>Synechococcus</taxon>
    </lineage>
</organism>
<sequence length="66" mass="7629">MAKNKGVRIVVTLECTECRSASASEKRSPGVSRYTTEKNRRNTTERLEIMKFCPQLNKMTLHKEIK</sequence>
<evidence type="ECO:0000255" key="1">
    <source>
        <dbReference type="HAMAP-Rule" id="MF_00294"/>
    </source>
</evidence>
<evidence type="ECO:0000305" key="2"/>